<accession>A0A0D8BWP6</accession>
<sequence>MPINIPKDLPAKEILEQENIFVMDEERAYSQDIRPLNIIILNLMPEKEKAETQLLRLLGNSPLQVNVTFLRPATHEPKTTSKHHLEQFYTIFPHIRHRKFDGMIITGAPVEQLPFEEVTYWDELTDIMEWTKTNVTSTLHICWGAQAGLYYHYGIPKYPLPEKCFGVFNHTVEAKNVKLLRGFDDVFRMPHSRHTDVKREDIEKVPDLTILSMSDKAGVCLVASNDGRRIFLTGHPEYDATTLKEEYERDLAKGLPIHIPESYFPNDDPSQPPLNTWRSHANLLFVNWLNYYVYQETPYEWE</sequence>
<name>METAA_GEOKU</name>
<reference key="1">
    <citation type="journal article" date="2017" name="Nat. Chem. Biol.">
        <title>Parallel evolution of non-homologous isofunctional enzymes in methionine biosynthesis.</title>
        <authorList>
            <person name="Bastard K."/>
            <person name="Perret A."/>
            <person name="Mariage A."/>
            <person name="Bessonnet T."/>
            <person name="Pinet-Turpault A."/>
            <person name="Petit J.L."/>
            <person name="Darii E."/>
            <person name="Bazire P."/>
            <person name="Vergne-Vaxelaire C."/>
            <person name="Brewee C."/>
            <person name="Debard A."/>
            <person name="Pellouin V."/>
            <person name="Besnard-Gonnet M."/>
            <person name="Artiguenave F."/>
            <person name="Medigue C."/>
            <person name="Vallenet D."/>
            <person name="Danchin A."/>
            <person name="Zaparucha A."/>
            <person name="Weissenbach J."/>
            <person name="Salanoubat M."/>
            <person name="de Berardinis V."/>
        </authorList>
    </citation>
    <scope>NUCLEOTIDE SEQUENCE [GENOMIC DNA]</scope>
    <scope>FUNCTION</scope>
    <scope>CATALYTIC ACTIVITY</scope>
    <source>
        <strain>ATCC 8005 / DSM 7263 / JCM 20319 / NBRC 102445 / NCIMB 8547 / NRRL NRS-81 / IAM 11001 / BD53</strain>
    </source>
</reference>
<reference key="2">
    <citation type="submission" date="2015-01" db="EMBL/GenBank/DDBJ databases">
        <authorList>
            <person name="Filippidou S."/>
            <person name="Jeanneret N."/>
            <person name="Russel-Delif L."/>
            <person name="Junier T."/>
            <person name="Wunderlin T."/>
            <person name="Molina V."/>
            <person name="Johnson S.L."/>
            <person name="Davenport K.W."/>
            <person name="Chain P.S."/>
            <person name="Dorador C."/>
            <person name="Junier P."/>
        </authorList>
    </citation>
    <scope>NUCLEOTIDE SEQUENCE [LARGE SCALE GENOMIC DNA]</scope>
    <source>
        <strain>Et7/4</strain>
    </source>
</reference>
<keyword id="KW-0012">Acyltransferase</keyword>
<keyword id="KW-0028">Amino-acid biosynthesis</keyword>
<keyword id="KW-0963">Cytoplasm</keyword>
<keyword id="KW-0486">Methionine biosynthesis</keyword>
<keyword id="KW-0808">Transferase</keyword>
<dbReference type="EC" id="2.3.1.31" evidence="1 2"/>
<dbReference type="EMBL" id="LN871223">
    <property type="protein sequence ID" value="CTQ31226.1"/>
    <property type="molecule type" value="Genomic_DNA"/>
</dbReference>
<dbReference type="EMBL" id="JYBP01000003">
    <property type="protein sequence ID" value="KJE28404.1"/>
    <property type="molecule type" value="Genomic_DNA"/>
</dbReference>
<dbReference type="RefSeq" id="WP_014195890.1">
    <property type="nucleotide sequence ID" value="NZ_JYBP01000003.1"/>
</dbReference>
<dbReference type="SMR" id="A0A0D8BWP6"/>
<dbReference type="GeneID" id="32063669"/>
<dbReference type="PATRIC" id="fig|1462.6.peg.1545"/>
<dbReference type="OrthoDB" id="9772423at2"/>
<dbReference type="UniPathway" id="UPA00051">
    <property type="reaction ID" value="UER00074"/>
</dbReference>
<dbReference type="Proteomes" id="UP000032522">
    <property type="component" value="Unassembled WGS sequence"/>
</dbReference>
<dbReference type="GO" id="GO:0005737">
    <property type="term" value="C:cytoplasm"/>
    <property type="evidence" value="ECO:0007669"/>
    <property type="project" value="UniProtKB-SubCell"/>
</dbReference>
<dbReference type="GO" id="GO:0004414">
    <property type="term" value="F:homoserine O-acetyltransferase activity"/>
    <property type="evidence" value="ECO:0007669"/>
    <property type="project" value="UniProtKB-EC"/>
</dbReference>
<dbReference type="GO" id="GO:0008899">
    <property type="term" value="F:homoserine O-succinyltransferase activity"/>
    <property type="evidence" value="ECO:0007669"/>
    <property type="project" value="UniProtKB-UniRule"/>
</dbReference>
<dbReference type="GO" id="GO:0019281">
    <property type="term" value="P:L-methionine biosynthetic process from homoserine via O-succinyl-L-homoserine and cystathionine"/>
    <property type="evidence" value="ECO:0007669"/>
    <property type="project" value="InterPro"/>
</dbReference>
<dbReference type="CDD" id="cd03131">
    <property type="entry name" value="GATase1_HTS"/>
    <property type="match status" value="1"/>
</dbReference>
<dbReference type="FunFam" id="3.40.50.880:FF:000004">
    <property type="entry name" value="Homoserine O-succinyltransferase"/>
    <property type="match status" value="1"/>
</dbReference>
<dbReference type="Gene3D" id="3.40.50.880">
    <property type="match status" value="1"/>
</dbReference>
<dbReference type="HAMAP" id="MF_00295">
    <property type="entry name" value="MetA_acyltransf"/>
    <property type="match status" value="1"/>
</dbReference>
<dbReference type="InterPro" id="IPR029062">
    <property type="entry name" value="Class_I_gatase-like"/>
</dbReference>
<dbReference type="InterPro" id="IPR005697">
    <property type="entry name" value="HST_MetA"/>
</dbReference>
<dbReference type="InterPro" id="IPR033752">
    <property type="entry name" value="MetA_family"/>
</dbReference>
<dbReference type="NCBIfam" id="TIGR01001">
    <property type="entry name" value="metA"/>
    <property type="match status" value="1"/>
</dbReference>
<dbReference type="PANTHER" id="PTHR20919">
    <property type="entry name" value="HOMOSERINE O-SUCCINYLTRANSFERASE"/>
    <property type="match status" value="1"/>
</dbReference>
<dbReference type="PANTHER" id="PTHR20919:SF0">
    <property type="entry name" value="HOMOSERINE O-SUCCINYLTRANSFERASE"/>
    <property type="match status" value="1"/>
</dbReference>
<dbReference type="Pfam" id="PF04204">
    <property type="entry name" value="HTS"/>
    <property type="match status" value="1"/>
</dbReference>
<dbReference type="PIRSF" id="PIRSF000450">
    <property type="entry name" value="H_ser_succinyltr"/>
    <property type="match status" value="1"/>
</dbReference>
<dbReference type="SUPFAM" id="SSF52317">
    <property type="entry name" value="Class I glutamine amidotransferase-like"/>
    <property type="match status" value="1"/>
</dbReference>
<gene>
    <name evidence="1 3" type="primary">metAA</name>
    <name evidence="4" type="synonym">metA</name>
    <name evidence="4" type="ORF">LG52_1351</name>
</gene>
<feature type="chain" id="PRO_0000440340" description="Homoserine O-acetyltransferase">
    <location>
        <begin position="1"/>
        <end position="302"/>
    </location>
</feature>
<feature type="active site" description="Acyl-thioester intermediate" evidence="1">
    <location>
        <position position="142"/>
    </location>
</feature>
<feature type="active site" description="Proton acceptor" evidence="1">
    <location>
        <position position="235"/>
    </location>
</feature>
<feature type="active site" evidence="1">
    <location>
        <position position="237"/>
    </location>
</feature>
<feature type="binding site" evidence="1">
    <location>
        <position position="163"/>
    </location>
    <ligand>
        <name>substrate</name>
    </ligand>
</feature>
<feature type="binding site" evidence="1">
    <location>
        <position position="192"/>
    </location>
    <ligand>
        <name>substrate</name>
    </ligand>
</feature>
<feature type="binding site" evidence="1">
    <location>
        <position position="249"/>
    </location>
    <ligand>
        <name>substrate</name>
    </ligand>
</feature>
<feature type="site" description="Important for acyl-CoA specificity" evidence="1">
    <location>
        <position position="111"/>
    </location>
</feature>
<feature type="site" description="Important for substrate specificity" evidence="1">
    <location>
        <position position="192"/>
    </location>
</feature>
<proteinExistence type="evidence at protein level"/>
<organism>
    <name type="scientific">Geobacillus kaustophilus</name>
    <dbReference type="NCBI Taxonomy" id="1462"/>
    <lineage>
        <taxon>Bacteria</taxon>
        <taxon>Bacillati</taxon>
        <taxon>Bacillota</taxon>
        <taxon>Bacilli</taxon>
        <taxon>Bacillales</taxon>
        <taxon>Anoxybacillaceae</taxon>
        <taxon>Geobacillus</taxon>
        <taxon>Geobacillus thermoleovorans group</taxon>
    </lineage>
</organism>
<evidence type="ECO:0000255" key="1">
    <source>
        <dbReference type="HAMAP-Rule" id="MF_00295"/>
    </source>
</evidence>
<evidence type="ECO:0000269" key="2">
    <source>
    </source>
</evidence>
<evidence type="ECO:0000303" key="3">
    <source>
    </source>
</evidence>
<evidence type="ECO:0000312" key="4">
    <source>
        <dbReference type="EMBL" id="KJE28404.1"/>
    </source>
</evidence>
<comment type="function">
    <text evidence="1 2">Transfers an acetyl group from acetyl-CoA to L-homoserine, forming acetyl-L-homoserine.</text>
</comment>
<comment type="catalytic activity">
    <reaction evidence="1 2">
        <text>L-homoserine + acetyl-CoA = O-acetyl-L-homoserine + CoA</text>
        <dbReference type="Rhea" id="RHEA:13701"/>
        <dbReference type="ChEBI" id="CHEBI:57287"/>
        <dbReference type="ChEBI" id="CHEBI:57288"/>
        <dbReference type="ChEBI" id="CHEBI:57476"/>
        <dbReference type="ChEBI" id="CHEBI:57716"/>
        <dbReference type="EC" id="2.3.1.31"/>
    </reaction>
</comment>
<comment type="pathway">
    <text evidence="1">Amino-acid biosynthesis; L-methionine biosynthesis via de novo pathway; O-acetyl-L-homoserine from L-homoserine: step 1/1.</text>
</comment>
<comment type="subcellular location">
    <subcellularLocation>
        <location evidence="1">Cytoplasm</location>
    </subcellularLocation>
</comment>
<comment type="similarity">
    <text evidence="1">Belongs to the MetA family.</text>
</comment>
<protein>
    <recommendedName>
        <fullName evidence="1">Homoserine O-acetyltransferase</fullName>
        <shortName evidence="1 3">HAT</shortName>
        <ecNumber evidence="1 2">2.3.1.31</ecNumber>
    </recommendedName>
    <alternativeName>
        <fullName evidence="1">Homoserine transacetylase</fullName>
        <shortName evidence="1">HTA</shortName>
    </alternativeName>
</protein>